<evidence type="ECO:0000250" key="1"/>
<evidence type="ECO:0000305" key="2"/>
<accession>Q9PPJ4</accession>
<accession>Q0PAG6</accession>
<feature type="chain" id="PRO_0000060350" description="tRNA (guanine-N(1)-)-methyltransferase">
    <location>
        <begin position="1"/>
        <end position="234"/>
    </location>
</feature>
<feature type="binding site" evidence="1">
    <location>
        <position position="112"/>
    </location>
    <ligand>
        <name>S-adenosyl-L-methionine</name>
        <dbReference type="ChEBI" id="CHEBI:59789"/>
    </ligand>
</feature>
<feature type="binding site" evidence="1">
    <location>
        <begin position="132"/>
        <end position="137"/>
    </location>
    <ligand>
        <name>S-adenosyl-L-methionine</name>
        <dbReference type="ChEBI" id="CHEBI:59789"/>
    </ligand>
</feature>
<gene>
    <name type="primary">trmD</name>
    <name type="ordered locus">Cj0713</name>
</gene>
<name>TRMD_CAMJE</name>
<dbReference type="EC" id="2.1.1.228"/>
<dbReference type="EMBL" id="AL111168">
    <property type="protein sequence ID" value="CAL34850.1"/>
    <property type="molecule type" value="Genomic_DNA"/>
</dbReference>
<dbReference type="PIR" id="D81342">
    <property type="entry name" value="D81342"/>
</dbReference>
<dbReference type="RefSeq" id="WP_002868040.1">
    <property type="nucleotide sequence ID" value="NZ_SZUC01000002.1"/>
</dbReference>
<dbReference type="RefSeq" id="YP_002344131.1">
    <property type="nucleotide sequence ID" value="NC_002163.1"/>
</dbReference>
<dbReference type="SMR" id="Q9PPJ4"/>
<dbReference type="IntAct" id="Q9PPJ4">
    <property type="interactions" value="35"/>
</dbReference>
<dbReference type="STRING" id="192222.Cj0713"/>
<dbReference type="PaxDb" id="192222-Cj0713"/>
<dbReference type="EnsemblBacteria" id="CAL34850">
    <property type="protein sequence ID" value="CAL34850"/>
    <property type="gene ID" value="Cj0713"/>
</dbReference>
<dbReference type="GeneID" id="904477"/>
<dbReference type="KEGG" id="cje:Cj0713"/>
<dbReference type="PATRIC" id="fig|192222.6.peg.705"/>
<dbReference type="eggNOG" id="COG0336">
    <property type="taxonomic scope" value="Bacteria"/>
</dbReference>
<dbReference type="HOGENOM" id="CLU_047363_0_1_7"/>
<dbReference type="OrthoDB" id="9807416at2"/>
<dbReference type="Proteomes" id="UP000000799">
    <property type="component" value="Chromosome"/>
</dbReference>
<dbReference type="GO" id="GO:0005829">
    <property type="term" value="C:cytosol"/>
    <property type="evidence" value="ECO:0007669"/>
    <property type="project" value="TreeGrafter"/>
</dbReference>
<dbReference type="GO" id="GO:0052906">
    <property type="term" value="F:tRNA (guanine(37)-N1)-methyltransferase activity"/>
    <property type="evidence" value="ECO:0007669"/>
    <property type="project" value="UniProtKB-UniRule"/>
</dbReference>
<dbReference type="GO" id="GO:0002939">
    <property type="term" value="P:tRNA N1-guanine methylation"/>
    <property type="evidence" value="ECO:0007669"/>
    <property type="project" value="TreeGrafter"/>
</dbReference>
<dbReference type="CDD" id="cd18080">
    <property type="entry name" value="TrmD-like"/>
    <property type="match status" value="1"/>
</dbReference>
<dbReference type="Gene3D" id="3.40.1280.10">
    <property type="match status" value="1"/>
</dbReference>
<dbReference type="Gene3D" id="1.10.1270.20">
    <property type="entry name" value="tRNA(m1g37)methyltransferase, domain 2"/>
    <property type="match status" value="1"/>
</dbReference>
<dbReference type="HAMAP" id="MF_00605">
    <property type="entry name" value="TrmD"/>
    <property type="match status" value="1"/>
</dbReference>
<dbReference type="InterPro" id="IPR029028">
    <property type="entry name" value="Alpha/beta_knot_MTases"/>
</dbReference>
<dbReference type="InterPro" id="IPR023148">
    <property type="entry name" value="tRNA_m1G_MeTrfase_C_sf"/>
</dbReference>
<dbReference type="InterPro" id="IPR002649">
    <property type="entry name" value="tRNA_m1G_MeTrfase_TrmD"/>
</dbReference>
<dbReference type="InterPro" id="IPR029026">
    <property type="entry name" value="tRNA_m1G_MTases_N"/>
</dbReference>
<dbReference type="InterPro" id="IPR016009">
    <property type="entry name" value="tRNA_MeTrfase_TRMD/TRM10"/>
</dbReference>
<dbReference type="NCBIfam" id="NF000648">
    <property type="entry name" value="PRK00026.1"/>
    <property type="match status" value="1"/>
</dbReference>
<dbReference type="NCBIfam" id="TIGR00088">
    <property type="entry name" value="trmD"/>
    <property type="match status" value="1"/>
</dbReference>
<dbReference type="PANTHER" id="PTHR46417">
    <property type="entry name" value="TRNA (GUANINE-N(1)-)-METHYLTRANSFERASE"/>
    <property type="match status" value="1"/>
</dbReference>
<dbReference type="PANTHER" id="PTHR46417:SF1">
    <property type="entry name" value="TRNA (GUANINE-N(1)-)-METHYLTRANSFERASE"/>
    <property type="match status" value="1"/>
</dbReference>
<dbReference type="Pfam" id="PF01746">
    <property type="entry name" value="tRNA_m1G_MT"/>
    <property type="match status" value="1"/>
</dbReference>
<dbReference type="PIRSF" id="PIRSF000386">
    <property type="entry name" value="tRNA_mtase"/>
    <property type="match status" value="1"/>
</dbReference>
<dbReference type="SUPFAM" id="SSF75217">
    <property type="entry name" value="alpha/beta knot"/>
    <property type="match status" value="1"/>
</dbReference>
<sequence length="234" mass="27110">MKFSFVSLFPNLMEFYFQDSILARAKEKKLFKLNFYNPRDFSKNSYHKVDDYKIGGGAGLLMQAEPMYEVLRSIQEKKENPYFIFLNPSGKTFNQKDAKRLSKKEHIVFVCGRYEGIDERVLEIFANEVFSIGDFILTGGELPALVMCDAILRNVNGVLGNMESLEEESFENNLLEAPAFSKPFIFEKKNKKFYTPSEFLKGNHARIASLKTTLASCKTKFFRPDLFLEHERKK</sequence>
<protein>
    <recommendedName>
        <fullName>tRNA (guanine-N(1)-)-methyltransferase</fullName>
        <ecNumber>2.1.1.228</ecNumber>
    </recommendedName>
    <alternativeName>
        <fullName>M1G-methyltransferase</fullName>
    </alternativeName>
    <alternativeName>
        <fullName>tRNA [GM37] methyltransferase</fullName>
    </alternativeName>
</protein>
<reference key="1">
    <citation type="journal article" date="2000" name="Nature">
        <title>The genome sequence of the food-borne pathogen Campylobacter jejuni reveals hypervariable sequences.</title>
        <authorList>
            <person name="Parkhill J."/>
            <person name="Wren B.W."/>
            <person name="Mungall K.L."/>
            <person name="Ketley J.M."/>
            <person name="Churcher C.M."/>
            <person name="Basham D."/>
            <person name="Chillingworth T."/>
            <person name="Davies R.M."/>
            <person name="Feltwell T."/>
            <person name="Holroyd S."/>
            <person name="Jagels K."/>
            <person name="Karlyshev A.V."/>
            <person name="Moule S."/>
            <person name="Pallen M.J."/>
            <person name="Penn C.W."/>
            <person name="Quail M.A."/>
            <person name="Rajandream M.A."/>
            <person name="Rutherford K.M."/>
            <person name="van Vliet A.H.M."/>
            <person name="Whitehead S."/>
            <person name="Barrell B.G."/>
        </authorList>
    </citation>
    <scope>NUCLEOTIDE SEQUENCE [LARGE SCALE GENOMIC DNA]</scope>
    <source>
        <strain>ATCC 700819 / NCTC 11168</strain>
    </source>
</reference>
<comment type="function">
    <text evidence="1">Specifically methylates guanosine-37 in various tRNAs.</text>
</comment>
<comment type="catalytic activity">
    <reaction>
        <text>guanosine(37) in tRNA + S-adenosyl-L-methionine = N(1)-methylguanosine(37) in tRNA + S-adenosyl-L-homocysteine + H(+)</text>
        <dbReference type="Rhea" id="RHEA:36899"/>
        <dbReference type="Rhea" id="RHEA-COMP:10145"/>
        <dbReference type="Rhea" id="RHEA-COMP:10147"/>
        <dbReference type="ChEBI" id="CHEBI:15378"/>
        <dbReference type="ChEBI" id="CHEBI:57856"/>
        <dbReference type="ChEBI" id="CHEBI:59789"/>
        <dbReference type="ChEBI" id="CHEBI:73542"/>
        <dbReference type="ChEBI" id="CHEBI:74269"/>
        <dbReference type="EC" id="2.1.1.228"/>
    </reaction>
</comment>
<comment type="subunit">
    <text evidence="1">Homodimer.</text>
</comment>
<comment type="subcellular location">
    <subcellularLocation>
        <location evidence="2">Cytoplasm</location>
    </subcellularLocation>
</comment>
<comment type="similarity">
    <text evidence="2">Belongs to the RNA methyltransferase TrmD family.</text>
</comment>
<keyword id="KW-0963">Cytoplasm</keyword>
<keyword id="KW-0489">Methyltransferase</keyword>
<keyword id="KW-1185">Reference proteome</keyword>
<keyword id="KW-0949">S-adenosyl-L-methionine</keyword>
<keyword id="KW-0808">Transferase</keyword>
<keyword id="KW-0819">tRNA processing</keyword>
<proteinExistence type="inferred from homology"/>
<organism>
    <name type="scientific">Campylobacter jejuni subsp. jejuni serotype O:2 (strain ATCC 700819 / NCTC 11168)</name>
    <dbReference type="NCBI Taxonomy" id="192222"/>
    <lineage>
        <taxon>Bacteria</taxon>
        <taxon>Pseudomonadati</taxon>
        <taxon>Campylobacterota</taxon>
        <taxon>Epsilonproteobacteria</taxon>
        <taxon>Campylobacterales</taxon>
        <taxon>Campylobacteraceae</taxon>
        <taxon>Campylobacter</taxon>
    </lineage>
</organism>